<proteinExistence type="evidence at protein level"/>
<sequence length="247" mass="27839">MVQKFMSRYQAALLGLGLLLVFLLYMGLPGPPEQTSRLWRGPNVTVLTGLTRGNSRIFYREVLPIQQACRAEVVFLHGKAFNSHTWEQLGTLQLLSERGYRAVAIDLPGFGNSAPSEEVSTEAGRVELLERVFQDLQVQNTVLVSPSLSGSYALPFLMQNHHQLRGFVPIAPTYTRNYAQEQFRAVKTPTLILYGELDHTLARESLQQLRHLPNHSMVKLRDAGHACYLHKPEAFHLALLAFLDHLP</sequence>
<protein>
    <recommendedName>
        <fullName evidence="4">Protein ABHD14A</fullName>
        <ecNumber>3.-.-.-</ecNumber>
    </recommendedName>
    <alternativeName>
        <fullName evidence="4">Alpha/beta hydrolase domain-containing protein 14A</fullName>
        <shortName evidence="5">Abhydrolase domain-containing protein 14A</shortName>
    </alternativeName>
    <alternativeName>
        <fullName>Down-regulated in Zic-1-mutant protein</fullName>
    </alternativeName>
</protein>
<evidence type="ECO:0000250" key="1"/>
<evidence type="ECO:0000255" key="2"/>
<evidence type="ECO:0000269" key="3">
    <source>
    </source>
</evidence>
<evidence type="ECO:0000305" key="4"/>
<evidence type="ECO:0000312" key="5">
    <source>
        <dbReference type="MGI" id="MGI:1915894"/>
    </source>
</evidence>
<gene>
    <name evidence="5" type="primary">Abhd14a</name>
    <name type="synonym">Dorz1</name>
</gene>
<keyword id="KW-0963">Cytoplasm</keyword>
<keyword id="KW-0325">Glycoprotein</keyword>
<keyword id="KW-0378">Hydrolase</keyword>
<keyword id="KW-0472">Membrane</keyword>
<keyword id="KW-1185">Reference proteome</keyword>
<keyword id="KW-0735">Signal-anchor</keyword>
<keyword id="KW-0812">Transmembrane</keyword>
<keyword id="KW-1133">Transmembrane helix</keyword>
<reference key="1">
    <citation type="journal article" date="2003" name="Brain Res. Mol. Brain Res.">
        <title>Dorz1, a novel gene expressed in differentiating cerebellar granule neurons, is down-regulated in Zic1-deficient mouse.</title>
        <authorList>
            <person name="Hoshino J."/>
            <person name="Aruga J."/>
            <person name="Ishiguro A."/>
            <person name="Mikoshiba K."/>
        </authorList>
    </citation>
    <scope>NUCLEOTIDE SEQUENCE [MRNA]</scope>
    <scope>FUNCTION</scope>
    <scope>DEVELOPMENTAL STAGE</scope>
    <scope>TISSUE SPECIFICITY</scope>
    <scope>SUBCELLULAR LOCATION</scope>
    <source>
        <strain>ICR</strain>
        <tissue>Cerebellum</tissue>
    </source>
</reference>
<reference key="2">
    <citation type="journal article" date="2004" name="Genome Res.">
        <title>The status, quality, and expansion of the NIH full-length cDNA project: the Mammalian Gene Collection (MGC).</title>
        <authorList>
            <consortium name="The MGC Project Team"/>
        </authorList>
    </citation>
    <scope>NUCLEOTIDE SEQUENCE [LARGE SCALE MRNA]</scope>
    <source>
        <strain>FVB/N</strain>
        <tissue>Mammary tumor</tissue>
    </source>
</reference>
<reference key="3">
    <citation type="journal article" date="2010" name="Cell">
        <title>A tissue-specific atlas of mouse protein phosphorylation and expression.</title>
        <authorList>
            <person name="Huttlin E.L."/>
            <person name="Jedrychowski M.P."/>
            <person name="Elias J.E."/>
            <person name="Goswami T."/>
            <person name="Rad R."/>
            <person name="Beausoleil S.A."/>
            <person name="Villen J."/>
            <person name="Haas W."/>
            <person name="Sowa M.E."/>
            <person name="Gygi S.P."/>
        </authorList>
    </citation>
    <scope>IDENTIFICATION BY MASS SPECTROMETRY [LARGE SCALE ANALYSIS]</scope>
    <source>
        <tissue>Testis</tissue>
    </source>
</reference>
<feature type="chain" id="PRO_0000282286" description="Protein ABHD14A">
    <location>
        <begin position="1"/>
        <end position="247"/>
    </location>
</feature>
<feature type="transmembrane region" description="Helical; Signal-anchor for type II membrane protein" evidence="2">
    <location>
        <begin position="11"/>
        <end position="31"/>
    </location>
</feature>
<feature type="active site" description="Charge relay system" evidence="1">
    <location>
        <position position="147"/>
    </location>
</feature>
<feature type="active site" description="Charge relay system" evidence="1">
    <location>
        <position position="198"/>
    </location>
</feature>
<feature type="active site" description="Charge relay system" evidence="1">
    <location>
        <position position="225"/>
    </location>
</feature>
<feature type="glycosylation site" description="N-linked (GlcNAc...) asparagine" evidence="2">
    <location>
        <position position="43"/>
    </location>
</feature>
<feature type="sequence conflict" description="In Ref. 2; AAH06879." evidence="4" ref="2">
    <original>C</original>
    <variation>R</variation>
    <location>
        <position position="227"/>
    </location>
</feature>
<organism>
    <name type="scientific">Mus musculus</name>
    <name type="common">Mouse</name>
    <dbReference type="NCBI Taxonomy" id="10090"/>
    <lineage>
        <taxon>Eukaryota</taxon>
        <taxon>Metazoa</taxon>
        <taxon>Chordata</taxon>
        <taxon>Craniata</taxon>
        <taxon>Vertebrata</taxon>
        <taxon>Euteleostomi</taxon>
        <taxon>Mammalia</taxon>
        <taxon>Eutheria</taxon>
        <taxon>Euarchontoglires</taxon>
        <taxon>Glires</taxon>
        <taxon>Rodentia</taxon>
        <taxon>Myomorpha</taxon>
        <taxon>Muroidea</taxon>
        <taxon>Muridae</taxon>
        <taxon>Murinae</taxon>
        <taxon>Mus</taxon>
        <taxon>Mus</taxon>
    </lineage>
</organism>
<accession>Q922Q6</accession>
<accession>Q8K4S5</accession>
<comment type="function">
    <text evidence="3">Possible role in granule neuron development.</text>
</comment>
<comment type="subcellular location">
    <subcellularLocation>
        <location evidence="3">Cytoplasm</location>
    </subcellularLocation>
    <subcellularLocation>
        <location evidence="4">Membrane</location>
        <topology evidence="4">Single-pass type II membrane protein</topology>
    </subcellularLocation>
</comment>
<comment type="tissue specificity">
    <text evidence="3">Widely expressed. Higher expression is detected in brain, kidney, heart, testis, ovary and uterus.</text>
</comment>
<comment type="developmental stage">
    <text evidence="3">Expressed in cerebellum during embryogenesis. Highly expressed at 17.5 dpc in the cerebellar granule neurons precursors.</text>
</comment>
<comment type="similarity">
    <text evidence="4">Belongs to the AB hydrolase superfamily. ABHD14 family.</text>
</comment>
<comment type="caution">
    <text evidence="4">It is uncertain whether Met-1 or Met-6 is the initiator.</text>
</comment>
<name>ABHEA_MOUSE</name>
<dbReference type="EC" id="3.-.-.-"/>
<dbReference type="EMBL" id="AB073619">
    <property type="protein sequence ID" value="BAB91136.1"/>
    <property type="molecule type" value="mRNA"/>
</dbReference>
<dbReference type="EMBL" id="BC006879">
    <property type="protein sequence ID" value="AAH06879.1"/>
    <property type="molecule type" value="mRNA"/>
</dbReference>
<dbReference type="SMR" id="Q922Q6"/>
<dbReference type="FunCoup" id="Q922Q6">
    <property type="interactions" value="253"/>
</dbReference>
<dbReference type="STRING" id="10090.ENSMUSP00000126916"/>
<dbReference type="ESTHER" id="mouse-Dorz1">
    <property type="family name" value="CIB-CCG1-interacting-factor-B"/>
</dbReference>
<dbReference type="MEROPS" id="S33.981"/>
<dbReference type="GlyCosmos" id="Q922Q6">
    <property type="glycosylation" value="1 site, No reported glycans"/>
</dbReference>
<dbReference type="GlyGen" id="Q922Q6">
    <property type="glycosylation" value="2 sites, 2 N-linked glycans (2 sites)"/>
</dbReference>
<dbReference type="iPTMnet" id="Q922Q6"/>
<dbReference type="PhosphoSitePlus" id="Q922Q6"/>
<dbReference type="PaxDb" id="10090-ENSMUSP00000126916"/>
<dbReference type="PeptideAtlas" id="Q922Q6"/>
<dbReference type="ProteomicsDB" id="285907"/>
<dbReference type="AGR" id="MGI:1915894"/>
<dbReference type="MGI" id="MGI:1915894">
    <property type="gene designation" value="Abhd14a"/>
</dbReference>
<dbReference type="eggNOG" id="ENOG502QR0B">
    <property type="taxonomic scope" value="Eukaryota"/>
</dbReference>
<dbReference type="InParanoid" id="Q922Q6"/>
<dbReference type="PhylomeDB" id="Q922Q6"/>
<dbReference type="ChiTaRS" id="Abhd14a">
    <property type="organism name" value="mouse"/>
</dbReference>
<dbReference type="PRO" id="PR:Q922Q6"/>
<dbReference type="Proteomes" id="UP000000589">
    <property type="component" value="Unplaced"/>
</dbReference>
<dbReference type="RNAct" id="Q922Q6">
    <property type="molecule type" value="protein"/>
</dbReference>
<dbReference type="GO" id="GO:0005737">
    <property type="term" value="C:cytoplasm"/>
    <property type="evidence" value="ECO:0000314"/>
    <property type="project" value="MGI"/>
</dbReference>
<dbReference type="GO" id="GO:0016020">
    <property type="term" value="C:membrane"/>
    <property type="evidence" value="ECO:0007669"/>
    <property type="project" value="UniProtKB-SubCell"/>
</dbReference>
<dbReference type="GO" id="GO:0016787">
    <property type="term" value="F:hydrolase activity"/>
    <property type="evidence" value="ECO:0007669"/>
    <property type="project" value="UniProtKB-KW"/>
</dbReference>
<dbReference type="FunFam" id="3.40.50.1820:FF:000093">
    <property type="entry name" value="protein ABHD14A isoform X1"/>
    <property type="match status" value="1"/>
</dbReference>
<dbReference type="Gene3D" id="3.40.50.1820">
    <property type="entry name" value="alpha/beta hydrolase"/>
    <property type="match status" value="1"/>
</dbReference>
<dbReference type="InterPro" id="IPR000073">
    <property type="entry name" value="AB_hydrolase_1"/>
</dbReference>
<dbReference type="InterPro" id="IPR029058">
    <property type="entry name" value="AB_hydrolase_fold"/>
</dbReference>
<dbReference type="PANTHER" id="PTHR46197:SF1">
    <property type="entry name" value="PROTEIN ABHD14A"/>
    <property type="match status" value="1"/>
</dbReference>
<dbReference type="PANTHER" id="PTHR46197">
    <property type="entry name" value="PROTEIN ABHD14B-LIKE"/>
    <property type="match status" value="1"/>
</dbReference>
<dbReference type="Pfam" id="PF12697">
    <property type="entry name" value="Abhydrolase_6"/>
    <property type="match status" value="1"/>
</dbReference>
<dbReference type="SUPFAM" id="SSF53474">
    <property type="entry name" value="alpha/beta-Hydrolases"/>
    <property type="match status" value="1"/>
</dbReference>